<feature type="chain" id="PRO_1000076910" description="Phosphoserine aminotransferase">
    <location>
        <begin position="1"/>
        <end position="361"/>
    </location>
</feature>
<feature type="binding site" evidence="1">
    <location>
        <position position="42"/>
    </location>
    <ligand>
        <name>L-glutamate</name>
        <dbReference type="ChEBI" id="CHEBI:29985"/>
    </ligand>
</feature>
<feature type="binding site" evidence="1">
    <location>
        <begin position="76"/>
        <end position="77"/>
    </location>
    <ligand>
        <name>pyridoxal 5'-phosphate</name>
        <dbReference type="ChEBI" id="CHEBI:597326"/>
    </ligand>
</feature>
<feature type="binding site" evidence="1">
    <location>
        <position position="102"/>
    </location>
    <ligand>
        <name>pyridoxal 5'-phosphate</name>
        <dbReference type="ChEBI" id="CHEBI:597326"/>
    </ligand>
</feature>
<feature type="binding site" evidence="1">
    <location>
        <position position="152"/>
    </location>
    <ligand>
        <name>pyridoxal 5'-phosphate</name>
        <dbReference type="ChEBI" id="CHEBI:597326"/>
    </ligand>
</feature>
<feature type="binding site" evidence="1">
    <location>
        <position position="172"/>
    </location>
    <ligand>
        <name>pyridoxal 5'-phosphate</name>
        <dbReference type="ChEBI" id="CHEBI:597326"/>
    </ligand>
</feature>
<feature type="binding site" evidence="1">
    <location>
        <position position="195"/>
    </location>
    <ligand>
        <name>pyridoxal 5'-phosphate</name>
        <dbReference type="ChEBI" id="CHEBI:597326"/>
    </ligand>
</feature>
<feature type="binding site" evidence="1">
    <location>
        <begin position="237"/>
        <end position="238"/>
    </location>
    <ligand>
        <name>pyridoxal 5'-phosphate</name>
        <dbReference type="ChEBI" id="CHEBI:597326"/>
    </ligand>
</feature>
<feature type="modified residue" description="N6-(pyridoxal phosphate)lysine" evidence="1">
    <location>
        <position position="196"/>
    </location>
</feature>
<sequence>MTRAFNFSAGPATLPESVLRQAQAEMVEWNGVGASIVEISHRSADFMAVAAAAEADLRSLLSIPDDYAVLFTAGGATTIQALLPLNFAAPGQAADYVITGHWGKTAIKQAATSVDARIAADAQADGFVDIPPAASWTLSPHSAYVHITANETIHGVEFRDTPDVGTLPLFADFSSSIASEPLDISRYGLIYAGAQKNLGPVGISVVIVRRDLLERAGQPRADIFNYASHAARDSMLNTPPTWNWYVLGLTVKWMLEQGGVQEFARRNAEKAALVYGAIDGSGGFYRNLIKPAVRSRMNIPFFLPDEQLDALFVSESKAAGLLALKGHKAVGGIRASLYNAMPVAGAQALAAFMHDFQQRHG</sequence>
<proteinExistence type="inferred from homology"/>
<organism>
    <name type="scientific">Xanthomonas euvesicatoria pv. vesicatoria (strain 85-10)</name>
    <name type="common">Xanthomonas campestris pv. vesicatoria</name>
    <dbReference type="NCBI Taxonomy" id="316273"/>
    <lineage>
        <taxon>Bacteria</taxon>
        <taxon>Pseudomonadati</taxon>
        <taxon>Pseudomonadota</taxon>
        <taxon>Gammaproteobacteria</taxon>
        <taxon>Lysobacterales</taxon>
        <taxon>Lysobacteraceae</taxon>
        <taxon>Xanthomonas</taxon>
    </lineage>
</organism>
<keyword id="KW-0028">Amino-acid biosynthesis</keyword>
<keyword id="KW-0032">Aminotransferase</keyword>
<keyword id="KW-0963">Cytoplasm</keyword>
<keyword id="KW-0663">Pyridoxal phosphate</keyword>
<keyword id="KW-0664">Pyridoxine biosynthesis</keyword>
<keyword id="KW-0718">Serine biosynthesis</keyword>
<keyword id="KW-0808">Transferase</keyword>
<name>SERC_XANE5</name>
<comment type="function">
    <text evidence="1">Catalyzes the reversible conversion of 3-phosphohydroxypyruvate to phosphoserine and of 3-hydroxy-2-oxo-4-phosphonooxybutanoate to phosphohydroxythreonine.</text>
</comment>
<comment type="catalytic activity">
    <reaction evidence="1">
        <text>O-phospho-L-serine + 2-oxoglutarate = 3-phosphooxypyruvate + L-glutamate</text>
        <dbReference type="Rhea" id="RHEA:14329"/>
        <dbReference type="ChEBI" id="CHEBI:16810"/>
        <dbReference type="ChEBI" id="CHEBI:18110"/>
        <dbReference type="ChEBI" id="CHEBI:29985"/>
        <dbReference type="ChEBI" id="CHEBI:57524"/>
        <dbReference type="EC" id="2.6.1.52"/>
    </reaction>
</comment>
<comment type="catalytic activity">
    <reaction evidence="1">
        <text>4-(phosphooxy)-L-threonine + 2-oxoglutarate = (R)-3-hydroxy-2-oxo-4-phosphooxybutanoate + L-glutamate</text>
        <dbReference type="Rhea" id="RHEA:16573"/>
        <dbReference type="ChEBI" id="CHEBI:16810"/>
        <dbReference type="ChEBI" id="CHEBI:29985"/>
        <dbReference type="ChEBI" id="CHEBI:58452"/>
        <dbReference type="ChEBI" id="CHEBI:58538"/>
        <dbReference type="EC" id="2.6.1.52"/>
    </reaction>
</comment>
<comment type="cofactor">
    <cofactor evidence="1">
        <name>pyridoxal 5'-phosphate</name>
        <dbReference type="ChEBI" id="CHEBI:597326"/>
    </cofactor>
    <text evidence="1">Binds 1 pyridoxal phosphate per subunit.</text>
</comment>
<comment type="pathway">
    <text evidence="1">Amino-acid biosynthesis; L-serine biosynthesis; L-serine from 3-phospho-D-glycerate: step 2/3.</text>
</comment>
<comment type="pathway">
    <text evidence="1">Cofactor biosynthesis; pyridoxine 5'-phosphate biosynthesis; pyridoxine 5'-phosphate from D-erythrose 4-phosphate: step 3/5.</text>
</comment>
<comment type="subunit">
    <text evidence="1">Homodimer.</text>
</comment>
<comment type="subcellular location">
    <subcellularLocation>
        <location evidence="1">Cytoplasm</location>
    </subcellularLocation>
</comment>
<comment type="similarity">
    <text evidence="1">Belongs to the class-V pyridoxal-phosphate-dependent aminotransferase family. SerC subfamily.</text>
</comment>
<gene>
    <name evidence="1" type="primary">serC</name>
    <name type="ordered locus">XCV1689</name>
</gene>
<dbReference type="EC" id="2.6.1.52" evidence="1"/>
<dbReference type="EMBL" id="AM039952">
    <property type="protein sequence ID" value="CAJ23366.1"/>
    <property type="molecule type" value="Genomic_DNA"/>
</dbReference>
<dbReference type="RefSeq" id="WP_011347046.1">
    <property type="nucleotide sequence ID" value="NZ_CP017190.1"/>
</dbReference>
<dbReference type="SMR" id="Q3BUZ3"/>
<dbReference type="STRING" id="456327.BJD11_14135"/>
<dbReference type="GeneID" id="61778552"/>
<dbReference type="KEGG" id="xcv:XCV1689"/>
<dbReference type="eggNOG" id="COG1932">
    <property type="taxonomic scope" value="Bacteria"/>
</dbReference>
<dbReference type="HOGENOM" id="CLU_034866_0_2_6"/>
<dbReference type="UniPathway" id="UPA00135">
    <property type="reaction ID" value="UER00197"/>
</dbReference>
<dbReference type="UniPathway" id="UPA00244">
    <property type="reaction ID" value="UER00311"/>
</dbReference>
<dbReference type="Proteomes" id="UP000007069">
    <property type="component" value="Chromosome"/>
</dbReference>
<dbReference type="GO" id="GO:0005737">
    <property type="term" value="C:cytoplasm"/>
    <property type="evidence" value="ECO:0007669"/>
    <property type="project" value="UniProtKB-SubCell"/>
</dbReference>
<dbReference type="GO" id="GO:0004648">
    <property type="term" value="F:O-phospho-L-serine:2-oxoglutarate aminotransferase activity"/>
    <property type="evidence" value="ECO:0007669"/>
    <property type="project" value="UniProtKB-UniRule"/>
</dbReference>
<dbReference type="GO" id="GO:0030170">
    <property type="term" value="F:pyridoxal phosphate binding"/>
    <property type="evidence" value="ECO:0007669"/>
    <property type="project" value="UniProtKB-UniRule"/>
</dbReference>
<dbReference type="GO" id="GO:0006564">
    <property type="term" value="P:L-serine biosynthetic process"/>
    <property type="evidence" value="ECO:0007669"/>
    <property type="project" value="UniProtKB-UniRule"/>
</dbReference>
<dbReference type="GO" id="GO:0008615">
    <property type="term" value="P:pyridoxine biosynthetic process"/>
    <property type="evidence" value="ECO:0007669"/>
    <property type="project" value="UniProtKB-UniRule"/>
</dbReference>
<dbReference type="FunFam" id="3.40.640.10:FF:000010">
    <property type="entry name" value="Phosphoserine aminotransferase"/>
    <property type="match status" value="1"/>
</dbReference>
<dbReference type="FunFam" id="3.90.1150.10:FF:000006">
    <property type="entry name" value="Phosphoserine aminotransferase"/>
    <property type="match status" value="1"/>
</dbReference>
<dbReference type="Gene3D" id="3.90.1150.10">
    <property type="entry name" value="Aspartate Aminotransferase, domain 1"/>
    <property type="match status" value="1"/>
</dbReference>
<dbReference type="Gene3D" id="3.40.640.10">
    <property type="entry name" value="Type I PLP-dependent aspartate aminotransferase-like (Major domain)"/>
    <property type="match status" value="1"/>
</dbReference>
<dbReference type="HAMAP" id="MF_00160">
    <property type="entry name" value="SerC_aminotrans_5"/>
    <property type="match status" value="1"/>
</dbReference>
<dbReference type="InterPro" id="IPR000192">
    <property type="entry name" value="Aminotrans_V_dom"/>
</dbReference>
<dbReference type="InterPro" id="IPR020578">
    <property type="entry name" value="Aminotrans_V_PyrdxlP_BS"/>
</dbReference>
<dbReference type="InterPro" id="IPR022278">
    <property type="entry name" value="Pser_aminoTfrase"/>
</dbReference>
<dbReference type="InterPro" id="IPR015424">
    <property type="entry name" value="PyrdxlP-dep_Trfase"/>
</dbReference>
<dbReference type="InterPro" id="IPR015421">
    <property type="entry name" value="PyrdxlP-dep_Trfase_major"/>
</dbReference>
<dbReference type="InterPro" id="IPR015422">
    <property type="entry name" value="PyrdxlP-dep_Trfase_small"/>
</dbReference>
<dbReference type="NCBIfam" id="NF003764">
    <property type="entry name" value="PRK05355.1"/>
    <property type="match status" value="1"/>
</dbReference>
<dbReference type="NCBIfam" id="TIGR01364">
    <property type="entry name" value="serC_1"/>
    <property type="match status" value="1"/>
</dbReference>
<dbReference type="PANTHER" id="PTHR43247">
    <property type="entry name" value="PHOSPHOSERINE AMINOTRANSFERASE"/>
    <property type="match status" value="1"/>
</dbReference>
<dbReference type="PANTHER" id="PTHR43247:SF1">
    <property type="entry name" value="PHOSPHOSERINE AMINOTRANSFERASE"/>
    <property type="match status" value="1"/>
</dbReference>
<dbReference type="Pfam" id="PF00266">
    <property type="entry name" value="Aminotran_5"/>
    <property type="match status" value="1"/>
</dbReference>
<dbReference type="PIRSF" id="PIRSF000525">
    <property type="entry name" value="SerC"/>
    <property type="match status" value="1"/>
</dbReference>
<dbReference type="SUPFAM" id="SSF53383">
    <property type="entry name" value="PLP-dependent transferases"/>
    <property type="match status" value="1"/>
</dbReference>
<dbReference type="PROSITE" id="PS00595">
    <property type="entry name" value="AA_TRANSFER_CLASS_5"/>
    <property type="match status" value="1"/>
</dbReference>
<protein>
    <recommendedName>
        <fullName evidence="1">Phosphoserine aminotransferase</fullName>
        <ecNumber evidence="1">2.6.1.52</ecNumber>
    </recommendedName>
    <alternativeName>
        <fullName evidence="1">Phosphohydroxythreonine aminotransferase</fullName>
        <shortName evidence="1">PSAT</shortName>
    </alternativeName>
</protein>
<evidence type="ECO:0000255" key="1">
    <source>
        <dbReference type="HAMAP-Rule" id="MF_00160"/>
    </source>
</evidence>
<accession>Q3BUZ3</accession>
<reference key="1">
    <citation type="journal article" date="2005" name="J. Bacteriol.">
        <title>Insights into genome plasticity and pathogenicity of the plant pathogenic Bacterium Xanthomonas campestris pv. vesicatoria revealed by the complete genome sequence.</title>
        <authorList>
            <person name="Thieme F."/>
            <person name="Koebnik R."/>
            <person name="Bekel T."/>
            <person name="Berger C."/>
            <person name="Boch J."/>
            <person name="Buettner D."/>
            <person name="Caldana C."/>
            <person name="Gaigalat L."/>
            <person name="Goesmann A."/>
            <person name="Kay S."/>
            <person name="Kirchner O."/>
            <person name="Lanz C."/>
            <person name="Linke B."/>
            <person name="McHardy A.C."/>
            <person name="Meyer F."/>
            <person name="Mittenhuber G."/>
            <person name="Nies D.H."/>
            <person name="Niesbach-Kloesgen U."/>
            <person name="Patschkowski T."/>
            <person name="Rueckert C."/>
            <person name="Rupp O."/>
            <person name="Schneiker S."/>
            <person name="Schuster S.C."/>
            <person name="Vorhoelter F.J."/>
            <person name="Weber E."/>
            <person name="Puehler A."/>
            <person name="Bonas U."/>
            <person name="Bartels D."/>
            <person name="Kaiser O."/>
        </authorList>
    </citation>
    <scope>NUCLEOTIDE SEQUENCE [LARGE SCALE GENOMIC DNA]</scope>
    <source>
        <strain>85-10</strain>
    </source>
</reference>